<sequence>MQKYISEARLLLALAIPVILAQIAQTAMGFVDTVMAGGYSATDMAAVAIGTSIWLPAILFGHGLLLALTPVIAQLNGSGRRERIAHQVRQGFWLAGFVSVLIMLVLWNAGYIIRSMQNIDPALADKAVGYLRALLWGAPGYLFFQVARNQCEGLAKTKPGMVMGFIGLLVNIPVNYIFIYGHFGMPELGGVGCGVATAAVYWVMFLAMVSYIKRARSMRDIRNEKGTAKPDPAVMKRLIQLGLPIALALFFEVTLFAVVALLVSPLGIVDVAGHQIALNFSSLMFVLPMSLAAAVTIRVGYRLGQGSTLDAQTAARTGLMVGVCMATLTAIFTVSLREQIALLYNDNPEVVTLAAHLMLLAAVYQISDSIQVIGSGILRGYKDTRSIFYITFTAYWVLGLPSGYILALTDLVVEPMGPAGFWIGFIIGLTSAAIMMMLRMRFLQRLPSAIILQRAAR</sequence>
<dbReference type="EMBL" id="CP000243">
    <property type="protein sequence ID" value="ABE07332.1"/>
    <property type="molecule type" value="Genomic_DNA"/>
</dbReference>
<dbReference type="RefSeq" id="WP_001174963.1">
    <property type="nucleotide sequence ID" value="NZ_CP064825.1"/>
</dbReference>
<dbReference type="SMR" id="Q1RBD2"/>
<dbReference type="KEGG" id="eci:UTI89_C1854"/>
<dbReference type="HOGENOM" id="CLU_012893_6_0_6"/>
<dbReference type="Proteomes" id="UP000001952">
    <property type="component" value="Chromosome"/>
</dbReference>
<dbReference type="GO" id="GO:0005886">
    <property type="term" value="C:plasma membrane"/>
    <property type="evidence" value="ECO:0007669"/>
    <property type="project" value="UniProtKB-SubCell"/>
</dbReference>
<dbReference type="GO" id="GO:0015297">
    <property type="term" value="F:antiporter activity"/>
    <property type="evidence" value="ECO:0007669"/>
    <property type="project" value="UniProtKB-UniRule"/>
</dbReference>
<dbReference type="GO" id="GO:0042910">
    <property type="term" value="F:xenobiotic transmembrane transporter activity"/>
    <property type="evidence" value="ECO:0007669"/>
    <property type="project" value="UniProtKB-UniRule"/>
</dbReference>
<dbReference type="GO" id="GO:0006814">
    <property type="term" value="P:sodium ion transport"/>
    <property type="evidence" value="ECO:0007669"/>
    <property type="project" value="UniProtKB-UniRule"/>
</dbReference>
<dbReference type="GO" id="GO:0006855">
    <property type="term" value="P:xenobiotic transmembrane transport"/>
    <property type="evidence" value="ECO:0007669"/>
    <property type="project" value="UniProtKB-UniRule"/>
</dbReference>
<dbReference type="CDD" id="cd13131">
    <property type="entry name" value="MATE_NorM_like"/>
    <property type="match status" value="1"/>
</dbReference>
<dbReference type="HAMAP" id="MF_00400">
    <property type="entry name" value="MdtK"/>
    <property type="match status" value="1"/>
</dbReference>
<dbReference type="InterPro" id="IPR002528">
    <property type="entry name" value="MATE_fam"/>
</dbReference>
<dbReference type="InterPro" id="IPR050222">
    <property type="entry name" value="MATE_MdtK"/>
</dbReference>
<dbReference type="InterPro" id="IPR048279">
    <property type="entry name" value="MdtK-like"/>
</dbReference>
<dbReference type="InterPro" id="IPR022913">
    <property type="entry name" value="Multidrug-R_MdtK"/>
</dbReference>
<dbReference type="NCBIfam" id="TIGR00797">
    <property type="entry name" value="matE"/>
    <property type="match status" value="1"/>
</dbReference>
<dbReference type="PANTHER" id="PTHR43298:SF2">
    <property type="entry name" value="FMN_FAD EXPORTER YEEO-RELATED"/>
    <property type="match status" value="1"/>
</dbReference>
<dbReference type="PANTHER" id="PTHR43298">
    <property type="entry name" value="MULTIDRUG RESISTANCE PROTEIN NORM-RELATED"/>
    <property type="match status" value="1"/>
</dbReference>
<dbReference type="Pfam" id="PF01554">
    <property type="entry name" value="MatE"/>
    <property type="match status" value="2"/>
</dbReference>
<dbReference type="PIRSF" id="PIRSF006603">
    <property type="entry name" value="DinF"/>
    <property type="match status" value="1"/>
</dbReference>
<feature type="chain" id="PRO_0000279849" description="Multidrug resistance protein MdtK">
    <location>
        <begin position="1"/>
        <end position="457"/>
    </location>
</feature>
<feature type="topological domain" description="Cytoplasmic" evidence="1">
    <location>
        <begin position="1"/>
        <end position="10"/>
    </location>
</feature>
<feature type="transmembrane region" description="Helical" evidence="2">
    <location>
        <begin position="11"/>
        <end position="31"/>
    </location>
</feature>
<feature type="topological domain" description="Periplasmic" evidence="1">
    <location>
        <begin position="32"/>
        <end position="52"/>
    </location>
</feature>
<feature type="transmembrane region" description="Helical" evidence="2">
    <location>
        <begin position="53"/>
        <end position="73"/>
    </location>
</feature>
<feature type="topological domain" description="Cytoplasmic" evidence="1">
    <location>
        <begin position="74"/>
        <end position="92"/>
    </location>
</feature>
<feature type="transmembrane region" description="Helical" evidence="2">
    <location>
        <begin position="93"/>
        <end position="113"/>
    </location>
</feature>
<feature type="topological domain" description="Periplasmic" evidence="1">
    <location>
        <begin position="114"/>
        <end position="126"/>
    </location>
</feature>
<feature type="transmembrane region" description="Helical" evidence="2">
    <location>
        <begin position="127"/>
        <end position="147"/>
    </location>
</feature>
<feature type="topological domain" description="Cytoplasmic" evidence="1">
    <location>
        <begin position="148"/>
        <end position="159"/>
    </location>
</feature>
<feature type="transmembrane region" description="Helical" evidence="2">
    <location>
        <begin position="160"/>
        <end position="180"/>
    </location>
</feature>
<feature type="topological domain" description="Periplasmic" evidence="1">
    <location>
        <begin position="181"/>
        <end position="188"/>
    </location>
</feature>
<feature type="transmembrane region" description="Helical" evidence="2">
    <location>
        <begin position="189"/>
        <end position="209"/>
    </location>
</feature>
<feature type="topological domain" description="Cytoplasmic" evidence="1">
    <location>
        <begin position="210"/>
        <end position="242"/>
    </location>
</feature>
<feature type="transmembrane region" description="Helical" evidence="2">
    <location>
        <begin position="243"/>
        <end position="263"/>
    </location>
</feature>
<feature type="topological domain" description="Periplasmic" evidence="1">
    <location>
        <begin position="264"/>
        <end position="275"/>
    </location>
</feature>
<feature type="transmembrane region" description="Helical" evidence="2">
    <location>
        <begin position="276"/>
        <end position="296"/>
    </location>
</feature>
<feature type="topological domain" description="Cytoplasmic" evidence="1">
    <location>
        <begin position="297"/>
        <end position="313"/>
    </location>
</feature>
<feature type="transmembrane region" description="Helical" evidence="2">
    <location>
        <begin position="314"/>
        <end position="334"/>
    </location>
</feature>
<feature type="topological domain" description="Periplasmic" evidence="1">
    <location>
        <begin position="335"/>
        <end position="349"/>
    </location>
</feature>
<feature type="transmembrane region" description="Helical" evidence="2">
    <location>
        <begin position="350"/>
        <end position="370"/>
    </location>
</feature>
<feature type="topological domain" description="Cytoplasmic" evidence="1">
    <location>
        <begin position="371"/>
        <end position="386"/>
    </location>
</feature>
<feature type="transmembrane region" description="Helical" evidence="2">
    <location>
        <begin position="387"/>
        <end position="407"/>
    </location>
</feature>
<feature type="topological domain" description="Periplasmic" evidence="1">
    <location>
        <begin position="408"/>
        <end position="417"/>
    </location>
</feature>
<feature type="transmembrane region" description="Helical" evidence="2">
    <location>
        <begin position="418"/>
        <end position="438"/>
    </location>
</feature>
<feature type="topological domain" description="Cytoplasmic" evidence="1">
    <location>
        <begin position="439"/>
        <end position="457"/>
    </location>
</feature>
<protein>
    <recommendedName>
        <fullName evidence="2">Multidrug resistance protein MdtK</fullName>
    </recommendedName>
    <alternativeName>
        <fullName evidence="2">Multidrug-efflux transporter</fullName>
    </alternativeName>
</protein>
<name>MDTK_ECOUT</name>
<accession>Q1RBD2</accession>
<reference key="1">
    <citation type="journal article" date="2006" name="Proc. Natl. Acad. Sci. U.S.A.">
        <title>Identification of genes subject to positive selection in uropathogenic strains of Escherichia coli: a comparative genomics approach.</title>
        <authorList>
            <person name="Chen S.L."/>
            <person name="Hung C.-S."/>
            <person name="Xu J."/>
            <person name="Reigstad C.S."/>
            <person name="Magrini V."/>
            <person name="Sabo A."/>
            <person name="Blasiar D."/>
            <person name="Bieri T."/>
            <person name="Meyer R.R."/>
            <person name="Ozersky P."/>
            <person name="Armstrong J.R."/>
            <person name="Fulton R.S."/>
            <person name="Latreille J.P."/>
            <person name="Spieth J."/>
            <person name="Hooton T.M."/>
            <person name="Mardis E.R."/>
            <person name="Hultgren S.J."/>
            <person name="Gordon J.I."/>
        </authorList>
    </citation>
    <scope>NUCLEOTIDE SEQUENCE [LARGE SCALE GENOMIC DNA]</scope>
    <source>
        <strain>UTI89 / UPEC</strain>
    </source>
</reference>
<proteinExistence type="inferred from homology"/>
<comment type="function">
    <text evidence="2">Multidrug efflux pump that functions probably as a Na(+)/drug antiporter.</text>
</comment>
<comment type="subcellular location">
    <subcellularLocation>
        <location evidence="2">Cell inner membrane</location>
        <topology evidence="2">Multi-pass membrane protein</topology>
    </subcellularLocation>
</comment>
<comment type="similarity">
    <text evidence="2">Belongs to the multi antimicrobial extrusion (MATE) (TC 2.A.66.1) family. MdtK subfamily.</text>
</comment>
<keyword id="KW-0050">Antiport</keyword>
<keyword id="KW-0997">Cell inner membrane</keyword>
<keyword id="KW-1003">Cell membrane</keyword>
<keyword id="KW-0406">Ion transport</keyword>
<keyword id="KW-0472">Membrane</keyword>
<keyword id="KW-0915">Sodium</keyword>
<keyword id="KW-0739">Sodium transport</keyword>
<keyword id="KW-0812">Transmembrane</keyword>
<keyword id="KW-1133">Transmembrane helix</keyword>
<keyword id="KW-0813">Transport</keyword>
<evidence type="ECO:0000255" key="1"/>
<evidence type="ECO:0000255" key="2">
    <source>
        <dbReference type="HAMAP-Rule" id="MF_00400"/>
    </source>
</evidence>
<organism>
    <name type="scientific">Escherichia coli (strain UTI89 / UPEC)</name>
    <dbReference type="NCBI Taxonomy" id="364106"/>
    <lineage>
        <taxon>Bacteria</taxon>
        <taxon>Pseudomonadati</taxon>
        <taxon>Pseudomonadota</taxon>
        <taxon>Gammaproteobacteria</taxon>
        <taxon>Enterobacterales</taxon>
        <taxon>Enterobacteriaceae</taxon>
        <taxon>Escherichia</taxon>
    </lineage>
</organism>
<gene>
    <name evidence="2" type="primary">mdtK</name>
    <name type="ordered locus">UTI89_C1854</name>
</gene>